<comment type="function">
    <text evidence="1">Involved in the binding of tRNA to the ribosomes.</text>
</comment>
<comment type="subunit">
    <text evidence="1">Part of the 30S ribosomal subunit.</text>
</comment>
<comment type="similarity">
    <text evidence="1">Belongs to the universal ribosomal protein uS10 family.</text>
</comment>
<gene>
    <name evidence="1" type="primary">rpsJ</name>
    <name type="ordered locus">Lm4b_02600</name>
</gene>
<dbReference type="EMBL" id="FM242711">
    <property type="protein sequence ID" value="CAS06354.1"/>
    <property type="molecule type" value="Genomic_DNA"/>
</dbReference>
<dbReference type="RefSeq" id="WP_003720954.1">
    <property type="nucleotide sequence ID" value="NC_012488.1"/>
</dbReference>
<dbReference type="SMR" id="C1KZI1"/>
<dbReference type="GeneID" id="93240514"/>
<dbReference type="KEGG" id="lmc:Lm4b_02600"/>
<dbReference type="HOGENOM" id="CLU_122625_1_3_9"/>
<dbReference type="GO" id="GO:1990904">
    <property type="term" value="C:ribonucleoprotein complex"/>
    <property type="evidence" value="ECO:0007669"/>
    <property type="project" value="UniProtKB-KW"/>
</dbReference>
<dbReference type="GO" id="GO:0005840">
    <property type="term" value="C:ribosome"/>
    <property type="evidence" value="ECO:0007669"/>
    <property type="project" value="UniProtKB-KW"/>
</dbReference>
<dbReference type="GO" id="GO:0003735">
    <property type="term" value="F:structural constituent of ribosome"/>
    <property type="evidence" value="ECO:0007669"/>
    <property type="project" value="InterPro"/>
</dbReference>
<dbReference type="GO" id="GO:0000049">
    <property type="term" value="F:tRNA binding"/>
    <property type="evidence" value="ECO:0007669"/>
    <property type="project" value="UniProtKB-UniRule"/>
</dbReference>
<dbReference type="GO" id="GO:0006412">
    <property type="term" value="P:translation"/>
    <property type="evidence" value="ECO:0007669"/>
    <property type="project" value="UniProtKB-UniRule"/>
</dbReference>
<dbReference type="FunFam" id="3.30.70.600:FF:000001">
    <property type="entry name" value="30S ribosomal protein S10"/>
    <property type="match status" value="1"/>
</dbReference>
<dbReference type="Gene3D" id="3.30.70.600">
    <property type="entry name" value="Ribosomal protein S10 domain"/>
    <property type="match status" value="1"/>
</dbReference>
<dbReference type="HAMAP" id="MF_00508">
    <property type="entry name" value="Ribosomal_uS10"/>
    <property type="match status" value="1"/>
</dbReference>
<dbReference type="InterPro" id="IPR001848">
    <property type="entry name" value="Ribosomal_uS10"/>
</dbReference>
<dbReference type="InterPro" id="IPR018268">
    <property type="entry name" value="Ribosomal_uS10_CS"/>
</dbReference>
<dbReference type="InterPro" id="IPR027486">
    <property type="entry name" value="Ribosomal_uS10_dom"/>
</dbReference>
<dbReference type="InterPro" id="IPR036838">
    <property type="entry name" value="Ribosomal_uS10_dom_sf"/>
</dbReference>
<dbReference type="NCBIfam" id="NF001861">
    <property type="entry name" value="PRK00596.1"/>
    <property type="match status" value="1"/>
</dbReference>
<dbReference type="NCBIfam" id="TIGR01049">
    <property type="entry name" value="rpsJ_bact"/>
    <property type="match status" value="1"/>
</dbReference>
<dbReference type="PANTHER" id="PTHR11700">
    <property type="entry name" value="30S RIBOSOMAL PROTEIN S10 FAMILY MEMBER"/>
    <property type="match status" value="1"/>
</dbReference>
<dbReference type="Pfam" id="PF00338">
    <property type="entry name" value="Ribosomal_S10"/>
    <property type="match status" value="1"/>
</dbReference>
<dbReference type="PRINTS" id="PR00971">
    <property type="entry name" value="RIBOSOMALS10"/>
</dbReference>
<dbReference type="SMART" id="SM01403">
    <property type="entry name" value="Ribosomal_S10"/>
    <property type="match status" value="1"/>
</dbReference>
<dbReference type="SUPFAM" id="SSF54999">
    <property type="entry name" value="Ribosomal protein S10"/>
    <property type="match status" value="1"/>
</dbReference>
<dbReference type="PROSITE" id="PS00361">
    <property type="entry name" value="RIBOSOMAL_S10"/>
    <property type="match status" value="1"/>
</dbReference>
<protein>
    <recommendedName>
        <fullName evidence="1">Small ribosomal subunit protein uS10</fullName>
    </recommendedName>
    <alternativeName>
        <fullName evidence="2">30S ribosomal protein S10</fullName>
    </alternativeName>
</protein>
<name>RS10_LISMC</name>
<proteinExistence type="inferred from homology"/>
<sequence length="102" mass="11682">MAKQKIRIRLKAYDHRILDQSAEKIVETAKRSGASVSGPIPLPTEKSIYTVLRAVHKYKDSREQFEMRTHKRLIDIVNPTPQTVDSLMRLDLPSGVDIEIKL</sequence>
<feature type="chain" id="PRO_1000206590" description="Small ribosomal subunit protein uS10">
    <location>
        <begin position="1"/>
        <end position="102"/>
    </location>
</feature>
<organism>
    <name type="scientific">Listeria monocytogenes serotype 4b (strain CLIP80459)</name>
    <dbReference type="NCBI Taxonomy" id="568819"/>
    <lineage>
        <taxon>Bacteria</taxon>
        <taxon>Bacillati</taxon>
        <taxon>Bacillota</taxon>
        <taxon>Bacilli</taxon>
        <taxon>Bacillales</taxon>
        <taxon>Listeriaceae</taxon>
        <taxon>Listeria</taxon>
    </lineage>
</organism>
<keyword id="KW-0687">Ribonucleoprotein</keyword>
<keyword id="KW-0689">Ribosomal protein</keyword>
<accession>C1KZI1</accession>
<evidence type="ECO:0000255" key="1">
    <source>
        <dbReference type="HAMAP-Rule" id="MF_00508"/>
    </source>
</evidence>
<evidence type="ECO:0000305" key="2"/>
<reference key="1">
    <citation type="journal article" date="2012" name="BMC Genomics">
        <title>Comparative genomics and transcriptomics of lineages I, II, and III strains of Listeria monocytogenes.</title>
        <authorList>
            <person name="Hain T."/>
            <person name="Ghai R."/>
            <person name="Billion A."/>
            <person name="Kuenne C.T."/>
            <person name="Steinweg C."/>
            <person name="Izar B."/>
            <person name="Mohamed W."/>
            <person name="Mraheil M."/>
            <person name="Domann E."/>
            <person name="Schaffrath S."/>
            <person name="Karst U."/>
            <person name="Goesmann A."/>
            <person name="Oehm S."/>
            <person name="Puhler A."/>
            <person name="Merkl R."/>
            <person name="Vorwerk S."/>
            <person name="Glaser P."/>
            <person name="Garrido P."/>
            <person name="Rusniok C."/>
            <person name="Buchrieser C."/>
            <person name="Goebel W."/>
            <person name="Chakraborty T."/>
        </authorList>
    </citation>
    <scope>NUCLEOTIDE SEQUENCE [LARGE SCALE GENOMIC DNA]</scope>
    <source>
        <strain>CLIP80459</strain>
    </source>
</reference>